<sequence length="902" mass="99638">MSNFLPIPTKAATPLPSFAKHLLDYISAHFRDTHSEAFRKDVDVLVGMRKDWVEAKLEAHPEIIRAFMRYHAQLAFLSTKFPSDINLPFAYYLPFPATFSLSPDAPISLSSLTFERACVLFNMTALYASMAAAERRAEAEGIKRALGYLTAAAGVLEYLITSVLPTLRSELSSPQAAGYDMTESFLGTLKEFVLAEAQECYWQQAVLQGTYKNGLIGKLSMKVSEYYKAALASMNGTDYPSSSYFPLNWTAHMNVKQMHFEAAAQFRLSQEDLEKSRYGEEIGRLKVAESLAKKGLDAARKGVADSVVSDLKQLHAAIKSSLERAVRDNDLVYVQPIPPANQLAPIVGVGMVKVNVPAEVAEPVAWLMGGKAGMEPLFSGLVPYGVHLALSIYDDRKDTLVRDLDGKREELDGLAASTLQSLNLPGSIQALDRPVGLPPSLLKKSEEVASSGGIERIRSLLDEVNRLAHANVQSLNEAMDILDQEATENESLIARQPELQQTRQPSHVANQPLIQMAEQYEATIKQAGGSDATVRAKWEEWARLVGILAAGEMEMEDYVPGTTSPSGSLPPSVRPLRASLEELDDRIAHRARLVREARQISAADDIRPEVLKEAAKLAHGGSGDVKTEWFEDLFEKGLEKYMGVKREMDEEVAKHDELLEQIRTQNESFLSERKDDPIIKERERRLQDMDLAYWKWREIVDNAEEGIKFYNSFAEMLHGFKAACGQFLNTRRIDVGQMTTQFQQQMNVSEPQQQPEPRYQSPSPQSFQPSFSPSPSHFQPSAPSSFSSSPVRSPAPSAPARRESPPKTLSFLPHPSSSAWQPASVDFLPPPPPPPILRSGGIQSQPKVAPPVTPSITAIRDQTQGTPRRMTRAAAAAAERDEATERNKYSSGGPRRKGGGVV</sequence>
<organism>
    <name type="scientific">Cryptococcus neoformans var. neoformans serotype D (strain B-3501A)</name>
    <name type="common">Filobasidiella neoformans</name>
    <dbReference type="NCBI Taxonomy" id="283643"/>
    <lineage>
        <taxon>Eukaryota</taxon>
        <taxon>Fungi</taxon>
        <taxon>Dikarya</taxon>
        <taxon>Basidiomycota</taxon>
        <taxon>Agaricomycotina</taxon>
        <taxon>Tremellomycetes</taxon>
        <taxon>Tremellales</taxon>
        <taxon>Cryptococcaceae</taxon>
        <taxon>Cryptococcus</taxon>
        <taxon>Cryptococcus neoformans species complex</taxon>
    </lineage>
</organism>
<name>PALA_CRYNB</name>
<protein>
    <recommendedName>
        <fullName>pH-response regulator protein palA/RIM20</fullName>
    </recommendedName>
</protein>
<evidence type="ECO:0000250" key="1"/>
<evidence type="ECO:0000255" key="2">
    <source>
        <dbReference type="PROSITE-ProRule" id="PRU00526"/>
    </source>
</evidence>
<evidence type="ECO:0000256" key="3">
    <source>
        <dbReference type="SAM" id="MobiDB-lite"/>
    </source>
</evidence>
<evidence type="ECO:0000305" key="4"/>
<feature type="chain" id="PRO_0000410025" description="pH-response regulator protein palA/RIM20">
    <location>
        <begin position="1"/>
        <end position="902"/>
    </location>
</feature>
<feature type="domain" description="BRO1" evidence="2">
    <location>
        <begin position="3"/>
        <end position="415"/>
    </location>
</feature>
<feature type="region of interest" description="Disordered" evidence="3">
    <location>
        <begin position="744"/>
        <end position="902"/>
    </location>
</feature>
<feature type="compositionally biased region" description="Polar residues" evidence="3">
    <location>
        <begin position="744"/>
        <end position="755"/>
    </location>
</feature>
<feature type="compositionally biased region" description="Low complexity" evidence="3">
    <location>
        <begin position="757"/>
        <end position="799"/>
    </location>
</feature>
<feature type="compositionally biased region" description="Polar residues" evidence="3">
    <location>
        <begin position="854"/>
        <end position="865"/>
    </location>
</feature>
<feature type="compositionally biased region" description="Low complexity" evidence="3">
    <location>
        <begin position="866"/>
        <end position="877"/>
    </location>
</feature>
<feature type="compositionally biased region" description="Basic and acidic residues" evidence="3">
    <location>
        <begin position="878"/>
        <end position="888"/>
    </location>
</feature>
<proteinExistence type="inferred from homology"/>
<comment type="function">
    <text evidence="1">Required for the proteolytic cleavage of the transcription factor RIM101 in response to alkaline ambient pH. May act as a scaffold protein that recruits the calpain-like protease RIM13 via VPS32 to its substrate RIM101 (By similarity).</text>
</comment>
<comment type="subunit">
    <text evidence="1">Interacts with RIM101 by binding to its YPX[LI] motif.</text>
</comment>
<comment type="similarity">
    <text evidence="4">Belongs to the palA/RIM20 family.</text>
</comment>
<comment type="sequence caution" evidence="4">
    <conflict type="erroneous gene model prediction">
        <sequence resource="EMBL-CDS" id="EAL19504"/>
    </conflict>
</comment>
<reference key="1">
    <citation type="journal article" date="2005" name="Science">
        <title>The genome of the basidiomycetous yeast and human pathogen Cryptococcus neoformans.</title>
        <authorList>
            <person name="Loftus B.J."/>
            <person name="Fung E."/>
            <person name="Roncaglia P."/>
            <person name="Rowley D."/>
            <person name="Amedeo P."/>
            <person name="Bruno D."/>
            <person name="Vamathevan J."/>
            <person name="Miranda M."/>
            <person name="Anderson I.J."/>
            <person name="Fraser J.A."/>
            <person name="Allen J.E."/>
            <person name="Bosdet I.E."/>
            <person name="Brent M.R."/>
            <person name="Chiu R."/>
            <person name="Doering T.L."/>
            <person name="Donlin M.J."/>
            <person name="D'Souza C.A."/>
            <person name="Fox D.S."/>
            <person name="Grinberg V."/>
            <person name="Fu J."/>
            <person name="Fukushima M."/>
            <person name="Haas B.J."/>
            <person name="Huang J.C."/>
            <person name="Janbon G."/>
            <person name="Jones S.J.M."/>
            <person name="Koo H.L."/>
            <person name="Krzywinski M.I."/>
            <person name="Kwon-Chung K.J."/>
            <person name="Lengeler K.B."/>
            <person name="Maiti R."/>
            <person name="Marra M.A."/>
            <person name="Marra R.E."/>
            <person name="Mathewson C.A."/>
            <person name="Mitchell T.G."/>
            <person name="Pertea M."/>
            <person name="Riggs F.R."/>
            <person name="Salzberg S.L."/>
            <person name="Schein J.E."/>
            <person name="Shvartsbeyn A."/>
            <person name="Shin H."/>
            <person name="Shumway M."/>
            <person name="Specht C.A."/>
            <person name="Suh B.B."/>
            <person name="Tenney A."/>
            <person name="Utterback T.R."/>
            <person name="Wickes B.L."/>
            <person name="Wortman J.R."/>
            <person name="Wye N.H."/>
            <person name="Kronstad J.W."/>
            <person name="Lodge J.K."/>
            <person name="Heitman J."/>
            <person name="Davis R.W."/>
            <person name="Fraser C.M."/>
            <person name="Hyman R.W."/>
        </authorList>
    </citation>
    <scope>NUCLEOTIDE SEQUENCE [LARGE SCALE GENOMIC DNA]</scope>
    <source>
        <strain>B-3501A</strain>
    </source>
</reference>
<dbReference type="EMBL" id="AAEY01000039">
    <property type="protein sequence ID" value="EAL19504.1"/>
    <property type="status" value="ALT_SEQ"/>
    <property type="molecule type" value="Genomic_DNA"/>
</dbReference>
<dbReference type="RefSeq" id="XP_774151.1">
    <property type="nucleotide sequence ID" value="XM_769058.1"/>
</dbReference>
<dbReference type="SMR" id="P0CM47"/>
<dbReference type="EnsemblFungi" id="AAW44451">
    <property type="protein sequence ID" value="AAW44451"/>
    <property type="gene ID" value="CNG00250"/>
</dbReference>
<dbReference type="GeneID" id="4937488"/>
<dbReference type="KEGG" id="cnb:CNBG4510"/>
<dbReference type="HOGENOM" id="CLU_007181_2_1_1"/>
<dbReference type="OrthoDB" id="5654at5206"/>
<dbReference type="GO" id="GO:0005768">
    <property type="term" value="C:endosome"/>
    <property type="evidence" value="ECO:0007669"/>
    <property type="project" value="TreeGrafter"/>
</dbReference>
<dbReference type="CDD" id="cd09241">
    <property type="entry name" value="BRO1_ScRim20-like"/>
    <property type="match status" value="1"/>
</dbReference>
<dbReference type="CDD" id="cd09236">
    <property type="entry name" value="V_AnPalA_UmRIM20_like"/>
    <property type="match status" value="1"/>
</dbReference>
<dbReference type="FunFam" id="1.25.40.280:FF:000007">
    <property type="entry name" value="Unplaced genomic scaffold supercont1.4, whole genome shotgun sequence"/>
    <property type="match status" value="1"/>
</dbReference>
<dbReference type="Gene3D" id="1.20.120.560">
    <property type="entry name" value="alix/aip1 in complex with the ypdl late domain"/>
    <property type="match status" value="1"/>
</dbReference>
<dbReference type="Gene3D" id="1.20.140.50">
    <property type="entry name" value="alix/aip1 like domains"/>
    <property type="match status" value="1"/>
</dbReference>
<dbReference type="Gene3D" id="1.25.40.280">
    <property type="entry name" value="alix/aip1 like domains"/>
    <property type="match status" value="1"/>
</dbReference>
<dbReference type="InterPro" id="IPR025304">
    <property type="entry name" value="ALIX_V_dom"/>
</dbReference>
<dbReference type="InterPro" id="IPR004328">
    <property type="entry name" value="BRO1_dom"/>
</dbReference>
<dbReference type="InterPro" id="IPR038499">
    <property type="entry name" value="BRO1_sf"/>
</dbReference>
<dbReference type="PANTHER" id="PTHR23030">
    <property type="entry name" value="PCD6 INTERACTING PROTEIN-RELATED"/>
    <property type="match status" value="1"/>
</dbReference>
<dbReference type="PANTHER" id="PTHR23030:SF39">
    <property type="entry name" value="PROGRAMMED CELL DEATH 6-INTERACTING PROTEIN"/>
    <property type="match status" value="1"/>
</dbReference>
<dbReference type="Pfam" id="PF13949">
    <property type="entry name" value="ALIX_LYPXL_bnd"/>
    <property type="match status" value="1"/>
</dbReference>
<dbReference type="Pfam" id="PF03097">
    <property type="entry name" value="BRO1"/>
    <property type="match status" value="1"/>
</dbReference>
<dbReference type="SMART" id="SM01041">
    <property type="entry name" value="BRO1"/>
    <property type="match status" value="1"/>
</dbReference>
<dbReference type="PROSITE" id="PS51180">
    <property type="entry name" value="BRO1"/>
    <property type="match status" value="1"/>
</dbReference>
<gene>
    <name type="primary">RIM20</name>
    <name type="ordered locus">CNBG4510</name>
</gene>
<accession>P0CM47</accession>
<accession>Q55NW1</accession>
<accession>Q5KEK0</accession>